<comment type="function">
    <text>Shows antibacterial activity against representative Gram-negative and Gram-positive bacterial species, and hemolytic activity.</text>
</comment>
<comment type="subcellular location">
    <subcellularLocation>
        <location>Secreted</location>
    </subcellularLocation>
</comment>
<comment type="tissue specificity">
    <text>Expressed by the skin glands.</text>
</comment>
<comment type="similarity">
    <text evidence="2">Belongs to the frog skin active peptide (FSAP) family. Brevinin subfamily.</text>
</comment>
<evidence type="ECO:0000269" key="1">
    <source>
    </source>
</evidence>
<evidence type="ECO:0000305" key="2"/>
<feature type="peptide" id="PRO_0000044645" description="Brevinin-2Ec">
    <location>
        <begin position="1"/>
        <end position="34"/>
    </location>
</feature>
<feature type="disulfide bond" evidence="1">
    <location>
        <begin position="28"/>
        <end position="34"/>
    </location>
</feature>
<dbReference type="PIR" id="C55998">
    <property type="entry name" value="C55998"/>
</dbReference>
<dbReference type="SMR" id="P40839"/>
<dbReference type="GO" id="GO:0005576">
    <property type="term" value="C:extracellular region"/>
    <property type="evidence" value="ECO:0007669"/>
    <property type="project" value="UniProtKB-SubCell"/>
</dbReference>
<dbReference type="GO" id="GO:0042742">
    <property type="term" value="P:defense response to bacterium"/>
    <property type="evidence" value="ECO:0007669"/>
    <property type="project" value="UniProtKB-KW"/>
</dbReference>
<dbReference type="GO" id="GO:0031640">
    <property type="term" value="P:killing of cells of another organism"/>
    <property type="evidence" value="ECO:0007669"/>
    <property type="project" value="UniProtKB-KW"/>
</dbReference>
<dbReference type="InterPro" id="IPR012521">
    <property type="entry name" value="Antimicrobial_frog_2"/>
</dbReference>
<dbReference type="Pfam" id="PF08023">
    <property type="entry name" value="Antimicrobial_2"/>
    <property type="match status" value="1"/>
</dbReference>
<protein>
    <recommendedName>
        <fullName>Brevinin-2Ec</fullName>
    </recommendedName>
</protein>
<organism>
    <name type="scientific">Pelophylax lessonae</name>
    <name type="common">Pool frog</name>
    <name type="synonym">Rana lessonae</name>
    <dbReference type="NCBI Taxonomy" id="45623"/>
    <lineage>
        <taxon>Eukaryota</taxon>
        <taxon>Metazoa</taxon>
        <taxon>Chordata</taxon>
        <taxon>Craniata</taxon>
        <taxon>Vertebrata</taxon>
        <taxon>Euteleostomi</taxon>
        <taxon>Amphibia</taxon>
        <taxon>Batrachia</taxon>
        <taxon>Anura</taxon>
        <taxon>Neobatrachia</taxon>
        <taxon>Ranoidea</taxon>
        <taxon>Ranidae</taxon>
        <taxon>Pelophylax</taxon>
    </lineage>
</organism>
<reference key="1">
    <citation type="journal article" date="1994" name="J. Biol. Chem.">
        <title>Antimicrobial peptides from skin secretions of Rana esculenta. Molecular cloning of cDNAs encoding esculentin and brevinins and isolation of new active peptides.</title>
        <authorList>
            <person name="Simmaco M."/>
            <person name="Mignogna G."/>
            <person name="Barra D."/>
            <person name="Bossa F."/>
        </authorList>
    </citation>
    <scope>PROTEIN SEQUENCE</scope>
    <scope>DISULFIDE BOND</scope>
    <source>
        <tissue>Skin secretion</tissue>
    </source>
</reference>
<sequence>GILLDKLKNFAKTAGKGVLQSLLNTASCKLSGQC</sequence>
<accession>P40839</accession>
<proteinExistence type="evidence at protein level"/>
<name>BR2C_PELLE</name>
<keyword id="KW-0878">Amphibian defense peptide</keyword>
<keyword id="KW-0044">Antibiotic</keyword>
<keyword id="KW-0929">Antimicrobial</keyword>
<keyword id="KW-0204">Cytolysis</keyword>
<keyword id="KW-0903">Direct protein sequencing</keyword>
<keyword id="KW-1015">Disulfide bond</keyword>
<keyword id="KW-0354">Hemolysis</keyword>
<keyword id="KW-0964">Secreted</keyword>